<protein>
    <recommendedName>
        <fullName evidence="1">Glutamyl-tRNA(Gln) amidotransferase subunit A</fullName>
        <shortName evidence="1">Glu-ADT subunit A</shortName>
        <ecNumber evidence="1">6.3.5.7</ecNumber>
    </recommendedName>
</protein>
<name>GATA_PSYWF</name>
<keyword id="KW-0067">ATP-binding</keyword>
<keyword id="KW-0436">Ligase</keyword>
<keyword id="KW-0547">Nucleotide-binding</keyword>
<keyword id="KW-0648">Protein biosynthesis</keyword>
<gene>
    <name evidence="1" type="primary">gatA</name>
    <name type="ordered locus">PsycPRwf_0418</name>
</gene>
<sequence>MSDLHHLSIAKLVDGLQNQHFSSVELTDHFLKRINTLDKKVNSFITIDEEGARQAAQQADDRRSAGDNSVLLGLPMAHKDLFCTKGLLTTSGSKILHNFVSPYDATIVSNIREAGAVCLGKLNMDEFAMGSDNESSYYGAVHNPWDLSRVPGGSSGGSAAAVAAGFVPFATGSDTGGSIRQPASFCGLTGIKPTYGRVSRFGMIAYASSLDQAGTFGRSAQDCAYLLQPMAGHDARDATSIKRDVPDYVADLQSAAAQADADKPFSGLRIGVAKEYFGKGLDAEVDANVRAALKQYEELGATIVEVNITDPEITLATYYMLAPAEASSNLSRFDGVRFGYRCEDPKDLADLYTRSRSEGFGVEVQRRILMGTYALSAGYFDAYYTKAQKVRRLILQDFKNAFEKCDVIASPTAPTAAYKLDAALDPVTMYLGDVYTIGVNLAGLPAISMPAGFTESGLPIGLQLIGNHWDDSKLLSTAHIFQQHTDHHTKLSATAQESI</sequence>
<feature type="chain" id="PRO_1000071370" description="Glutamyl-tRNA(Gln) amidotransferase subunit A">
    <location>
        <begin position="1"/>
        <end position="499"/>
    </location>
</feature>
<feature type="active site" description="Charge relay system" evidence="1">
    <location>
        <position position="79"/>
    </location>
</feature>
<feature type="active site" description="Charge relay system" evidence="1">
    <location>
        <position position="154"/>
    </location>
</feature>
<feature type="active site" description="Acyl-ester intermediate" evidence="1">
    <location>
        <position position="178"/>
    </location>
</feature>
<evidence type="ECO:0000255" key="1">
    <source>
        <dbReference type="HAMAP-Rule" id="MF_00120"/>
    </source>
</evidence>
<proteinExistence type="inferred from homology"/>
<accession>A5WCI2</accession>
<comment type="function">
    <text evidence="1">Allows the formation of correctly charged Gln-tRNA(Gln) through the transamidation of misacylated Glu-tRNA(Gln) in organisms which lack glutaminyl-tRNA synthetase. The reaction takes place in the presence of glutamine and ATP through an activated gamma-phospho-Glu-tRNA(Gln).</text>
</comment>
<comment type="catalytic activity">
    <reaction evidence="1">
        <text>L-glutamyl-tRNA(Gln) + L-glutamine + ATP + H2O = L-glutaminyl-tRNA(Gln) + L-glutamate + ADP + phosphate + H(+)</text>
        <dbReference type="Rhea" id="RHEA:17521"/>
        <dbReference type="Rhea" id="RHEA-COMP:9681"/>
        <dbReference type="Rhea" id="RHEA-COMP:9684"/>
        <dbReference type="ChEBI" id="CHEBI:15377"/>
        <dbReference type="ChEBI" id="CHEBI:15378"/>
        <dbReference type="ChEBI" id="CHEBI:29985"/>
        <dbReference type="ChEBI" id="CHEBI:30616"/>
        <dbReference type="ChEBI" id="CHEBI:43474"/>
        <dbReference type="ChEBI" id="CHEBI:58359"/>
        <dbReference type="ChEBI" id="CHEBI:78520"/>
        <dbReference type="ChEBI" id="CHEBI:78521"/>
        <dbReference type="ChEBI" id="CHEBI:456216"/>
        <dbReference type="EC" id="6.3.5.7"/>
    </reaction>
</comment>
<comment type="subunit">
    <text evidence="1">Heterotrimer of A, B and C subunits.</text>
</comment>
<comment type="similarity">
    <text evidence="1">Belongs to the amidase family. GatA subfamily.</text>
</comment>
<dbReference type="EC" id="6.3.5.7" evidence="1"/>
<dbReference type="EMBL" id="CP000713">
    <property type="protein sequence ID" value="ABQ93373.1"/>
    <property type="molecule type" value="Genomic_DNA"/>
</dbReference>
<dbReference type="SMR" id="A5WCI2"/>
<dbReference type="STRING" id="349106.PsycPRwf_0418"/>
<dbReference type="KEGG" id="prw:PsycPRwf_0418"/>
<dbReference type="eggNOG" id="COG0154">
    <property type="taxonomic scope" value="Bacteria"/>
</dbReference>
<dbReference type="HOGENOM" id="CLU_009600_0_3_6"/>
<dbReference type="GO" id="GO:0030956">
    <property type="term" value="C:glutamyl-tRNA(Gln) amidotransferase complex"/>
    <property type="evidence" value="ECO:0007669"/>
    <property type="project" value="InterPro"/>
</dbReference>
<dbReference type="GO" id="GO:0005524">
    <property type="term" value="F:ATP binding"/>
    <property type="evidence" value="ECO:0007669"/>
    <property type="project" value="UniProtKB-KW"/>
</dbReference>
<dbReference type="GO" id="GO:0050567">
    <property type="term" value="F:glutaminyl-tRNA synthase (glutamine-hydrolyzing) activity"/>
    <property type="evidence" value="ECO:0007669"/>
    <property type="project" value="UniProtKB-UniRule"/>
</dbReference>
<dbReference type="GO" id="GO:0006412">
    <property type="term" value="P:translation"/>
    <property type="evidence" value="ECO:0007669"/>
    <property type="project" value="UniProtKB-UniRule"/>
</dbReference>
<dbReference type="Gene3D" id="3.90.1300.10">
    <property type="entry name" value="Amidase signature (AS) domain"/>
    <property type="match status" value="1"/>
</dbReference>
<dbReference type="HAMAP" id="MF_00120">
    <property type="entry name" value="GatA"/>
    <property type="match status" value="1"/>
</dbReference>
<dbReference type="InterPro" id="IPR000120">
    <property type="entry name" value="Amidase"/>
</dbReference>
<dbReference type="InterPro" id="IPR020556">
    <property type="entry name" value="Amidase_CS"/>
</dbReference>
<dbReference type="InterPro" id="IPR023631">
    <property type="entry name" value="Amidase_dom"/>
</dbReference>
<dbReference type="InterPro" id="IPR036928">
    <property type="entry name" value="AS_sf"/>
</dbReference>
<dbReference type="InterPro" id="IPR004412">
    <property type="entry name" value="GatA"/>
</dbReference>
<dbReference type="NCBIfam" id="TIGR00132">
    <property type="entry name" value="gatA"/>
    <property type="match status" value="1"/>
</dbReference>
<dbReference type="PANTHER" id="PTHR11895:SF151">
    <property type="entry name" value="GLUTAMYL-TRNA(GLN) AMIDOTRANSFERASE SUBUNIT A"/>
    <property type="match status" value="1"/>
</dbReference>
<dbReference type="PANTHER" id="PTHR11895">
    <property type="entry name" value="TRANSAMIDASE"/>
    <property type="match status" value="1"/>
</dbReference>
<dbReference type="Pfam" id="PF01425">
    <property type="entry name" value="Amidase"/>
    <property type="match status" value="1"/>
</dbReference>
<dbReference type="SUPFAM" id="SSF75304">
    <property type="entry name" value="Amidase signature (AS) enzymes"/>
    <property type="match status" value="1"/>
</dbReference>
<dbReference type="PROSITE" id="PS00571">
    <property type="entry name" value="AMIDASES"/>
    <property type="match status" value="1"/>
</dbReference>
<reference key="1">
    <citation type="submission" date="2007-05" db="EMBL/GenBank/DDBJ databases">
        <title>Complete sequence of chromosome of Psychrobacter sp. PRwf-1.</title>
        <authorList>
            <consortium name="US DOE Joint Genome Institute"/>
            <person name="Copeland A."/>
            <person name="Lucas S."/>
            <person name="Lapidus A."/>
            <person name="Barry K."/>
            <person name="Detter J.C."/>
            <person name="Glavina del Rio T."/>
            <person name="Hammon N."/>
            <person name="Israni S."/>
            <person name="Dalin E."/>
            <person name="Tice H."/>
            <person name="Pitluck S."/>
            <person name="Chain P."/>
            <person name="Malfatti S."/>
            <person name="Shin M."/>
            <person name="Vergez L."/>
            <person name="Schmutz J."/>
            <person name="Larimer F."/>
            <person name="Land M."/>
            <person name="Hauser L."/>
            <person name="Kyrpides N."/>
            <person name="Kim E."/>
            <person name="Tiedje J."/>
            <person name="Richardson P."/>
        </authorList>
    </citation>
    <scope>NUCLEOTIDE SEQUENCE [LARGE SCALE GENOMIC DNA]</scope>
    <source>
        <strain>PRwf-1</strain>
    </source>
</reference>
<organism>
    <name type="scientific">Psychrobacter sp. (strain PRwf-1)</name>
    <dbReference type="NCBI Taxonomy" id="349106"/>
    <lineage>
        <taxon>Bacteria</taxon>
        <taxon>Pseudomonadati</taxon>
        <taxon>Pseudomonadota</taxon>
        <taxon>Gammaproteobacteria</taxon>
        <taxon>Moraxellales</taxon>
        <taxon>Moraxellaceae</taxon>
        <taxon>Psychrobacter</taxon>
    </lineage>
</organism>